<proteinExistence type="evidence at transcript level"/>
<protein>
    <recommendedName>
        <fullName>Tetratricopeptide repeat protein 22</fullName>
        <shortName>TPR repeat protein 22</shortName>
    </recommendedName>
</protein>
<feature type="chain" id="PRO_0000263099" description="Tetratricopeptide repeat protein 22">
    <location>
        <begin position="1"/>
        <end position="568"/>
    </location>
</feature>
<feature type="repeat" description="TPR 1">
    <location>
        <begin position="66"/>
        <end position="99"/>
    </location>
</feature>
<feature type="repeat" description="TPR 2">
    <location>
        <begin position="101"/>
        <end position="133"/>
    </location>
</feature>
<feature type="repeat" description="TPR 3">
    <location>
        <begin position="155"/>
        <end position="190"/>
    </location>
</feature>
<feature type="repeat" description="TPR 4">
    <location>
        <begin position="203"/>
        <end position="237"/>
    </location>
</feature>
<feature type="repeat" description="TPR 5">
    <location>
        <begin position="260"/>
        <end position="294"/>
    </location>
</feature>
<feature type="repeat" description="TPR 6">
    <location>
        <begin position="296"/>
        <end position="328"/>
    </location>
</feature>
<feature type="repeat" description="TPR 7">
    <location>
        <begin position="432"/>
        <end position="465"/>
    </location>
</feature>
<name>TTC22_MOUSE</name>
<gene>
    <name type="primary">Ttc22</name>
</gene>
<sequence>MTEAEVGAEDLDTLLDELDYLPGHFHLEMQLNFEPRSPAQLRARDLKLQREGLRQELELVATPQLPAVRHLLGTFSFYLEELGDAREHFLEVARKDPGNLNAWANLAHVYGQLGQEEEEEASAGRLASLMGLEGDPEDAGDPRLRAARCLAEQGYAHGFDVGCASPEERAQVLEAGIALYDKALGYGQQIPIEEKRSWYFTMATLFIRLDGIFLEMGSEEQKRLPAFNRTLALLGEVLKSSDSRHQALAWCYVGMLLERKDTFSTTPMGVHEYGYSGTEPLDCFGKAIEIAKNQPPILNRLAKIFHFLGKQDMAVGTCNMVLAVLTDPELNWQAYCTRAKVRIRAYVHDLERAKVGLGGLPDRNHLACAKADLEEVVKVCPSLRTYLDISQVYYYMGVDAMRELLAVDEAALNQALVFLAKAGELELGDTLPELQLLRGKCLRVQGEDANAAACFKRAVELDDEGSSHTEGFGCLLEALLAQWSQAQLSDGEVGYEVDVWLRHAQGKYPAARLRQELQRVWRGHTEEVLGLARALVAQGRPALVRLLFETMEHEGEDAGGSGKSRVSS</sequence>
<organism>
    <name type="scientific">Mus musculus</name>
    <name type="common">Mouse</name>
    <dbReference type="NCBI Taxonomy" id="10090"/>
    <lineage>
        <taxon>Eukaryota</taxon>
        <taxon>Metazoa</taxon>
        <taxon>Chordata</taxon>
        <taxon>Craniata</taxon>
        <taxon>Vertebrata</taxon>
        <taxon>Euteleostomi</taxon>
        <taxon>Mammalia</taxon>
        <taxon>Eutheria</taxon>
        <taxon>Euarchontoglires</taxon>
        <taxon>Glires</taxon>
        <taxon>Rodentia</taxon>
        <taxon>Myomorpha</taxon>
        <taxon>Muroidea</taxon>
        <taxon>Muridae</taxon>
        <taxon>Murinae</taxon>
        <taxon>Mus</taxon>
        <taxon>Mus</taxon>
    </lineage>
</organism>
<keyword id="KW-1185">Reference proteome</keyword>
<keyword id="KW-0677">Repeat</keyword>
<keyword id="KW-0802">TPR repeat</keyword>
<dbReference type="EMBL" id="AK028895">
    <property type="protein sequence ID" value="BAC26180.1"/>
    <property type="molecule type" value="mRNA"/>
</dbReference>
<dbReference type="CCDS" id="CCDS18422.1"/>
<dbReference type="RefSeq" id="NP_808335.1">
    <property type="nucleotide sequence ID" value="NM_177667.5"/>
</dbReference>
<dbReference type="SMR" id="Q8C159"/>
<dbReference type="STRING" id="10090.ENSMUSP00000035773"/>
<dbReference type="PhosphoSitePlus" id="Q8C159"/>
<dbReference type="PaxDb" id="10090-ENSMUSP00000035773"/>
<dbReference type="ProteomicsDB" id="298006"/>
<dbReference type="Antibodypedia" id="33220">
    <property type="antibodies" value="23 antibodies from 13 providers"/>
</dbReference>
<dbReference type="Ensembl" id="ENSMUST00000047922.3">
    <property type="protein sequence ID" value="ENSMUSP00000035773.3"/>
    <property type="gene ID" value="ENSMUSG00000034919.3"/>
</dbReference>
<dbReference type="GeneID" id="230576"/>
<dbReference type="KEGG" id="mmu:230576"/>
<dbReference type="UCSC" id="uc008tyn.1">
    <property type="organism name" value="mouse"/>
</dbReference>
<dbReference type="AGR" id="MGI:3045307"/>
<dbReference type="CTD" id="55001"/>
<dbReference type="MGI" id="MGI:3045307">
    <property type="gene designation" value="Ttc22"/>
</dbReference>
<dbReference type="VEuPathDB" id="HostDB:ENSMUSG00000034919"/>
<dbReference type="eggNOG" id="ENOG502QPNX">
    <property type="taxonomic scope" value="Eukaryota"/>
</dbReference>
<dbReference type="GeneTree" id="ENSGT00390000007658"/>
<dbReference type="HOGENOM" id="CLU_034944_1_0_1"/>
<dbReference type="InParanoid" id="Q8C159"/>
<dbReference type="OMA" id="HHRALAW"/>
<dbReference type="OrthoDB" id="9976543at2759"/>
<dbReference type="PhylomeDB" id="Q8C159"/>
<dbReference type="TreeFam" id="TF331828"/>
<dbReference type="BioGRID-ORCS" id="230576">
    <property type="hits" value="5 hits in 78 CRISPR screens"/>
</dbReference>
<dbReference type="PRO" id="PR:Q8C159"/>
<dbReference type="Proteomes" id="UP000000589">
    <property type="component" value="Chromosome 4"/>
</dbReference>
<dbReference type="RNAct" id="Q8C159">
    <property type="molecule type" value="protein"/>
</dbReference>
<dbReference type="Bgee" id="ENSMUSG00000034919">
    <property type="expression patterns" value="Expressed in jejunum and 92 other cell types or tissues"/>
</dbReference>
<dbReference type="ExpressionAtlas" id="Q8C159">
    <property type="expression patterns" value="baseline and differential"/>
</dbReference>
<dbReference type="Gene3D" id="1.25.40.10">
    <property type="entry name" value="Tetratricopeptide repeat domain"/>
    <property type="match status" value="2"/>
</dbReference>
<dbReference type="InterPro" id="IPR011990">
    <property type="entry name" value="TPR-like_helical_dom_sf"/>
</dbReference>
<dbReference type="InterPro" id="IPR019734">
    <property type="entry name" value="TPR_rpt"/>
</dbReference>
<dbReference type="InterPro" id="IPR042342">
    <property type="entry name" value="TTC22"/>
</dbReference>
<dbReference type="PANTHER" id="PTHR16253">
    <property type="entry name" value="TETRATRICOPEPTIDE REPEAT PROTEIN 22"/>
    <property type="match status" value="1"/>
</dbReference>
<dbReference type="PANTHER" id="PTHR16253:SF0">
    <property type="entry name" value="TETRATRICOPEPTIDE REPEAT PROTEIN 22"/>
    <property type="match status" value="1"/>
</dbReference>
<dbReference type="SMART" id="SM00028">
    <property type="entry name" value="TPR"/>
    <property type="match status" value="3"/>
</dbReference>
<dbReference type="SUPFAM" id="SSF48452">
    <property type="entry name" value="TPR-like"/>
    <property type="match status" value="1"/>
</dbReference>
<accession>Q8C159</accession>
<reference key="1">
    <citation type="journal article" date="2005" name="Science">
        <title>The transcriptional landscape of the mammalian genome.</title>
        <authorList>
            <person name="Carninci P."/>
            <person name="Kasukawa T."/>
            <person name="Katayama S."/>
            <person name="Gough J."/>
            <person name="Frith M.C."/>
            <person name="Maeda N."/>
            <person name="Oyama R."/>
            <person name="Ravasi T."/>
            <person name="Lenhard B."/>
            <person name="Wells C."/>
            <person name="Kodzius R."/>
            <person name="Shimokawa K."/>
            <person name="Bajic V.B."/>
            <person name="Brenner S.E."/>
            <person name="Batalov S."/>
            <person name="Forrest A.R."/>
            <person name="Zavolan M."/>
            <person name="Davis M.J."/>
            <person name="Wilming L.G."/>
            <person name="Aidinis V."/>
            <person name="Allen J.E."/>
            <person name="Ambesi-Impiombato A."/>
            <person name="Apweiler R."/>
            <person name="Aturaliya R.N."/>
            <person name="Bailey T.L."/>
            <person name="Bansal M."/>
            <person name="Baxter L."/>
            <person name="Beisel K.W."/>
            <person name="Bersano T."/>
            <person name="Bono H."/>
            <person name="Chalk A.M."/>
            <person name="Chiu K.P."/>
            <person name="Choudhary V."/>
            <person name="Christoffels A."/>
            <person name="Clutterbuck D.R."/>
            <person name="Crowe M.L."/>
            <person name="Dalla E."/>
            <person name="Dalrymple B.P."/>
            <person name="de Bono B."/>
            <person name="Della Gatta G."/>
            <person name="di Bernardo D."/>
            <person name="Down T."/>
            <person name="Engstrom P."/>
            <person name="Fagiolini M."/>
            <person name="Faulkner G."/>
            <person name="Fletcher C.F."/>
            <person name="Fukushima T."/>
            <person name="Furuno M."/>
            <person name="Futaki S."/>
            <person name="Gariboldi M."/>
            <person name="Georgii-Hemming P."/>
            <person name="Gingeras T.R."/>
            <person name="Gojobori T."/>
            <person name="Green R.E."/>
            <person name="Gustincich S."/>
            <person name="Harbers M."/>
            <person name="Hayashi Y."/>
            <person name="Hensch T.K."/>
            <person name="Hirokawa N."/>
            <person name="Hill D."/>
            <person name="Huminiecki L."/>
            <person name="Iacono M."/>
            <person name="Ikeo K."/>
            <person name="Iwama A."/>
            <person name="Ishikawa T."/>
            <person name="Jakt M."/>
            <person name="Kanapin A."/>
            <person name="Katoh M."/>
            <person name="Kawasawa Y."/>
            <person name="Kelso J."/>
            <person name="Kitamura H."/>
            <person name="Kitano H."/>
            <person name="Kollias G."/>
            <person name="Krishnan S.P."/>
            <person name="Kruger A."/>
            <person name="Kummerfeld S.K."/>
            <person name="Kurochkin I.V."/>
            <person name="Lareau L.F."/>
            <person name="Lazarevic D."/>
            <person name="Lipovich L."/>
            <person name="Liu J."/>
            <person name="Liuni S."/>
            <person name="McWilliam S."/>
            <person name="Madan Babu M."/>
            <person name="Madera M."/>
            <person name="Marchionni L."/>
            <person name="Matsuda H."/>
            <person name="Matsuzawa S."/>
            <person name="Miki H."/>
            <person name="Mignone F."/>
            <person name="Miyake S."/>
            <person name="Morris K."/>
            <person name="Mottagui-Tabar S."/>
            <person name="Mulder N."/>
            <person name="Nakano N."/>
            <person name="Nakauchi H."/>
            <person name="Ng P."/>
            <person name="Nilsson R."/>
            <person name="Nishiguchi S."/>
            <person name="Nishikawa S."/>
            <person name="Nori F."/>
            <person name="Ohara O."/>
            <person name="Okazaki Y."/>
            <person name="Orlando V."/>
            <person name="Pang K.C."/>
            <person name="Pavan W.J."/>
            <person name="Pavesi G."/>
            <person name="Pesole G."/>
            <person name="Petrovsky N."/>
            <person name="Piazza S."/>
            <person name="Reed J."/>
            <person name="Reid J.F."/>
            <person name="Ring B.Z."/>
            <person name="Ringwald M."/>
            <person name="Rost B."/>
            <person name="Ruan Y."/>
            <person name="Salzberg S.L."/>
            <person name="Sandelin A."/>
            <person name="Schneider C."/>
            <person name="Schoenbach C."/>
            <person name="Sekiguchi K."/>
            <person name="Semple C.A."/>
            <person name="Seno S."/>
            <person name="Sessa L."/>
            <person name="Sheng Y."/>
            <person name="Shibata Y."/>
            <person name="Shimada H."/>
            <person name="Shimada K."/>
            <person name="Silva D."/>
            <person name="Sinclair B."/>
            <person name="Sperling S."/>
            <person name="Stupka E."/>
            <person name="Sugiura K."/>
            <person name="Sultana R."/>
            <person name="Takenaka Y."/>
            <person name="Taki K."/>
            <person name="Tammoja K."/>
            <person name="Tan S.L."/>
            <person name="Tang S."/>
            <person name="Taylor M.S."/>
            <person name="Tegner J."/>
            <person name="Teichmann S.A."/>
            <person name="Ueda H.R."/>
            <person name="van Nimwegen E."/>
            <person name="Verardo R."/>
            <person name="Wei C.L."/>
            <person name="Yagi K."/>
            <person name="Yamanishi H."/>
            <person name="Zabarovsky E."/>
            <person name="Zhu S."/>
            <person name="Zimmer A."/>
            <person name="Hide W."/>
            <person name="Bult C."/>
            <person name="Grimmond S.M."/>
            <person name="Teasdale R.D."/>
            <person name="Liu E.T."/>
            <person name="Brusic V."/>
            <person name="Quackenbush J."/>
            <person name="Wahlestedt C."/>
            <person name="Mattick J.S."/>
            <person name="Hume D.A."/>
            <person name="Kai C."/>
            <person name="Sasaki D."/>
            <person name="Tomaru Y."/>
            <person name="Fukuda S."/>
            <person name="Kanamori-Katayama M."/>
            <person name="Suzuki M."/>
            <person name="Aoki J."/>
            <person name="Arakawa T."/>
            <person name="Iida J."/>
            <person name="Imamura K."/>
            <person name="Itoh M."/>
            <person name="Kato T."/>
            <person name="Kawaji H."/>
            <person name="Kawagashira N."/>
            <person name="Kawashima T."/>
            <person name="Kojima M."/>
            <person name="Kondo S."/>
            <person name="Konno H."/>
            <person name="Nakano K."/>
            <person name="Ninomiya N."/>
            <person name="Nishio T."/>
            <person name="Okada M."/>
            <person name="Plessy C."/>
            <person name="Shibata K."/>
            <person name="Shiraki T."/>
            <person name="Suzuki S."/>
            <person name="Tagami M."/>
            <person name="Waki K."/>
            <person name="Watahiki A."/>
            <person name="Okamura-Oho Y."/>
            <person name="Suzuki H."/>
            <person name="Kawai J."/>
            <person name="Hayashizaki Y."/>
        </authorList>
    </citation>
    <scope>NUCLEOTIDE SEQUENCE [LARGE SCALE MRNA]</scope>
    <source>
        <strain>C57BL/6J</strain>
        <tissue>Skin</tissue>
    </source>
</reference>